<feature type="chain" id="PRO_0000437829" description="Heavy metal-associated isoprenylated plant protein 23">
    <location>
        <begin position="1"/>
        <end position="155"/>
    </location>
</feature>
<feature type="propeptide" id="PRO_0000437830" description="Removed in mature form" evidence="7">
    <location>
        <begin position="156"/>
        <end position="158"/>
    </location>
</feature>
<feature type="domain" description="HMA" evidence="3">
    <location>
        <begin position="31"/>
        <end position="94"/>
    </location>
</feature>
<feature type="binding site" evidence="3">
    <location>
        <position position="42"/>
    </location>
    <ligand>
        <name>a metal cation</name>
        <dbReference type="ChEBI" id="CHEBI:25213"/>
    </ligand>
</feature>
<feature type="binding site" evidence="3">
    <location>
        <position position="45"/>
    </location>
    <ligand>
        <name>a metal cation</name>
        <dbReference type="ChEBI" id="CHEBI:25213"/>
    </ligand>
</feature>
<feature type="modified residue" description="Cysteine methyl ester" evidence="2">
    <location>
        <position position="155"/>
    </location>
</feature>
<feature type="lipid moiety-binding region" description="S-farnesyl cysteine" evidence="2">
    <location>
        <position position="155"/>
    </location>
</feature>
<keyword id="KW-0449">Lipoprotein</keyword>
<keyword id="KW-0479">Metal-binding</keyword>
<keyword id="KW-0488">Methylation</keyword>
<keyword id="KW-0636">Prenylation</keyword>
<keyword id="KW-1185">Reference proteome</keyword>
<name>HIP23_ARATH</name>
<sequence>MGVGGTLEYISELIGNGGSHSYGKRKKKKQFQTVELKVRMDCDGCVLKIKNSLSSLKGVKTVEINKKQQKVTVSGYADASKVLKKAKATGKKAEIWPYVPYNLVAQPYIAQAYDKKAPPGYVRKVDPNVTTGTMAVYYDDPSYTSLFSDDNPNACSIM</sequence>
<gene>
    <name evidence="5 6" type="primary">HIPP23</name>
    <name evidence="8" type="ordered locus">At4g39700</name>
    <name evidence="9" type="ORF">T19P19.90</name>
</gene>
<comment type="function">
    <text evidence="1">Heavy-metal-binding protein.</text>
</comment>
<comment type="subunit">
    <text evidence="4">Interacts with ZHD11/HB29.</text>
</comment>
<comment type="similarity">
    <text evidence="7">Belongs to the HIPP family.</text>
</comment>
<proteinExistence type="evidence at protein level"/>
<evidence type="ECO:0000250" key="1">
    <source>
        <dbReference type="UniProtKB" id="Q9LZF1"/>
    </source>
</evidence>
<evidence type="ECO:0000250" key="2">
    <source>
        <dbReference type="UniProtKB" id="Q9SZN7"/>
    </source>
</evidence>
<evidence type="ECO:0000255" key="3">
    <source>
        <dbReference type="PROSITE-ProRule" id="PRU00280"/>
    </source>
</evidence>
<evidence type="ECO:0000269" key="4">
    <source>
    </source>
</evidence>
<evidence type="ECO:0000303" key="5">
    <source>
    </source>
</evidence>
<evidence type="ECO:0000303" key="6">
    <source>
    </source>
</evidence>
<evidence type="ECO:0000305" key="7"/>
<evidence type="ECO:0000312" key="8">
    <source>
        <dbReference type="Araport" id="AT4G39700"/>
    </source>
</evidence>
<evidence type="ECO:0000312" key="9">
    <source>
        <dbReference type="EMBL" id="CAA18756.1"/>
    </source>
</evidence>
<dbReference type="EMBL" id="AL022605">
    <property type="protein sequence ID" value="CAA18756.1"/>
    <property type="molecule type" value="Genomic_DNA"/>
</dbReference>
<dbReference type="EMBL" id="AL161595">
    <property type="protein sequence ID" value="CAB80633.1"/>
    <property type="molecule type" value="Genomic_DNA"/>
</dbReference>
<dbReference type="EMBL" id="CP002687">
    <property type="protein sequence ID" value="AEE87106.1"/>
    <property type="molecule type" value="Genomic_DNA"/>
</dbReference>
<dbReference type="PIR" id="T05007">
    <property type="entry name" value="T05007"/>
</dbReference>
<dbReference type="RefSeq" id="NP_195680.1">
    <property type="nucleotide sequence ID" value="NM_120131.2"/>
</dbReference>
<dbReference type="SMR" id="O65657"/>
<dbReference type="FunCoup" id="O65657">
    <property type="interactions" value="119"/>
</dbReference>
<dbReference type="IntAct" id="O65657">
    <property type="interactions" value="1"/>
</dbReference>
<dbReference type="STRING" id="3702.O65657"/>
<dbReference type="PaxDb" id="3702-AT4G39700.1"/>
<dbReference type="EnsemblPlants" id="AT4G39700.1">
    <property type="protein sequence ID" value="AT4G39700.1"/>
    <property type="gene ID" value="AT4G39700"/>
</dbReference>
<dbReference type="GeneID" id="830125"/>
<dbReference type="Gramene" id="AT4G39700.1">
    <property type="protein sequence ID" value="AT4G39700.1"/>
    <property type="gene ID" value="AT4G39700"/>
</dbReference>
<dbReference type="KEGG" id="ath:AT4G39700"/>
<dbReference type="Araport" id="AT4G39700"/>
<dbReference type="TAIR" id="AT4G39700"/>
<dbReference type="eggNOG" id="KOG1603">
    <property type="taxonomic scope" value="Eukaryota"/>
</dbReference>
<dbReference type="HOGENOM" id="CLU_100095_1_0_1"/>
<dbReference type="InParanoid" id="O65657"/>
<dbReference type="OMA" id="ISEMMSI"/>
<dbReference type="OrthoDB" id="689350at2759"/>
<dbReference type="PhylomeDB" id="O65657"/>
<dbReference type="PRO" id="PR:O65657"/>
<dbReference type="Proteomes" id="UP000006548">
    <property type="component" value="Chromosome 4"/>
</dbReference>
<dbReference type="ExpressionAtlas" id="O65657">
    <property type="expression patterns" value="baseline and differential"/>
</dbReference>
<dbReference type="GO" id="GO:0046872">
    <property type="term" value="F:metal ion binding"/>
    <property type="evidence" value="ECO:0007669"/>
    <property type="project" value="UniProtKB-KW"/>
</dbReference>
<dbReference type="CDD" id="cd00371">
    <property type="entry name" value="HMA"/>
    <property type="match status" value="1"/>
</dbReference>
<dbReference type="Gene3D" id="3.30.70.100">
    <property type="match status" value="1"/>
</dbReference>
<dbReference type="InterPro" id="IPR006121">
    <property type="entry name" value="HMA_dom"/>
</dbReference>
<dbReference type="InterPro" id="IPR036163">
    <property type="entry name" value="HMA_dom_sf"/>
</dbReference>
<dbReference type="PANTHER" id="PTHR22814">
    <property type="entry name" value="COPPER TRANSPORT PROTEIN ATOX1-RELATED"/>
    <property type="match status" value="1"/>
</dbReference>
<dbReference type="PANTHER" id="PTHR22814:SF336">
    <property type="entry name" value="HEAVY METAL-ASSOCIATED ISOPRENYLATED PLANT PROTEIN 23"/>
    <property type="match status" value="1"/>
</dbReference>
<dbReference type="Pfam" id="PF00403">
    <property type="entry name" value="HMA"/>
    <property type="match status" value="1"/>
</dbReference>
<dbReference type="SUPFAM" id="SSF55008">
    <property type="entry name" value="HMA, heavy metal-associated domain"/>
    <property type="match status" value="1"/>
</dbReference>
<dbReference type="PROSITE" id="PS50846">
    <property type="entry name" value="HMA_2"/>
    <property type="match status" value="1"/>
</dbReference>
<protein>
    <recommendedName>
        <fullName evidence="5 6">Heavy metal-associated isoprenylated plant protein 23</fullName>
        <shortName evidence="5 6">AtHIP23</shortName>
    </recommendedName>
</protein>
<organism>
    <name type="scientific">Arabidopsis thaliana</name>
    <name type="common">Mouse-ear cress</name>
    <dbReference type="NCBI Taxonomy" id="3702"/>
    <lineage>
        <taxon>Eukaryota</taxon>
        <taxon>Viridiplantae</taxon>
        <taxon>Streptophyta</taxon>
        <taxon>Embryophyta</taxon>
        <taxon>Tracheophyta</taxon>
        <taxon>Spermatophyta</taxon>
        <taxon>Magnoliopsida</taxon>
        <taxon>eudicotyledons</taxon>
        <taxon>Gunneridae</taxon>
        <taxon>Pentapetalae</taxon>
        <taxon>rosids</taxon>
        <taxon>malvids</taxon>
        <taxon>Brassicales</taxon>
        <taxon>Brassicaceae</taxon>
        <taxon>Camelineae</taxon>
        <taxon>Arabidopsis</taxon>
    </lineage>
</organism>
<accession>O65657</accession>
<reference key="1">
    <citation type="journal article" date="1999" name="Nature">
        <title>Sequence and analysis of chromosome 4 of the plant Arabidopsis thaliana.</title>
        <authorList>
            <person name="Mayer K.F.X."/>
            <person name="Schueller C."/>
            <person name="Wambutt R."/>
            <person name="Murphy G."/>
            <person name="Volckaert G."/>
            <person name="Pohl T."/>
            <person name="Duesterhoeft A."/>
            <person name="Stiekema W."/>
            <person name="Entian K.-D."/>
            <person name="Terryn N."/>
            <person name="Harris B."/>
            <person name="Ansorge W."/>
            <person name="Brandt P."/>
            <person name="Grivell L.A."/>
            <person name="Rieger M."/>
            <person name="Weichselgartner M."/>
            <person name="de Simone V."/>
            <person name="Obermaier B."/>
            <person name="Mache R."/>
            <person name="Mueller M."/>
            <person name="Kreis M."/>
            <person name="Delseny M."/>
            <person name="Puigdomenech P."/>
            <person name="Watson M."/>
            <person name="Schmidtheini T."/>
            <person name="Reichert B."/>
            <person name="Portetelle D."/>
            <person name="Perez-Alonso M."/>
            <person name="Boutry M."/>
            <person name="Bancroft I."/>
            <person name="Vos P."/>
            <person name="Hoheisel J."/>
            <person name="Zimmermann W."/>
            <person name="Wedler H."/>
            <person name="Ridley P."/>
            <person name="Langham S.-A."/>
            <person name="McCullagh B."/>
            <person name="Bilham L."/>
            <person name="Robben J."/>
            <person name="van der Schueren J."/>
            <person name="Grymonprez B."/>
            <person name="Chuang Y.-J."/>
            <person name="Vandenbussche F."/>
            <person name="Braeken M."/>
            <person name="Weltjens I."/>
            <person name="Voet M."/>
            <person name="Bastiaens I."/>
            <person name="Aert R."/>
            <person name="Defoor E."/>
            <person name="Weitzenegger T."/>
            <person name="Bothe G."/>
            <person name="Ramsperger U."/>
            <person name="Hilbert H."/>
            <person name="Braun M."/>
            <person name="Holzer E."/>
            <person name="Brandt A."/>
            <person name="Peters S."/>
            <person name="van Staveren M."/>
            <person name="Dirkse W."/>
            <person name="Mooijman P."/>
            <person name="Klein Lankhorst R."/>
            <person name="Rose M."/>
            <person name="Hauf J."/>
            <person name="Koetter P."/>
            <person name="Berneiser S."/>
            <person name="Hempel S."/>
            <person name="Feldpausch M."/>
            <person name="Lamberth S."/>
            <person name="Van den Daele H."/>
            <person name="De Keyser A."/>
            <person name="Buysshaert C."/>
            <person name="Gielen J."/>
            <person name="Villarroel R."/>
            <person name="De Clercq R."/>
            <person name="van Montagu M."/>
            <person name="Rogers J."/>
            <person name="Cronin A."/>
            <person name="Quail M.A."/>
            <person name="Bray-Allen S."/>
            <person name="Clark L."/>
            <person name="Doggett J."/>
            <person name="Hall S."/>
            <person name="Kay M."/>
            <person name="Lennard N."/>
            <person name="McLay K."/>
            <person name="Mayes R."/>
            <person name="Pettett A."/>
            <person name="Rajandream M.A."/>
            <person name="Lyne M."/>
            <person name="Benes V."/>
            <person name="Rechmann S."/>
            <person name="Borkova D."/>
            <person name="Bloecker H."/>
            <person name="Scharfe M."/>
            <person name="Grimm M."/>
            <person name="Loehnert T.-H."/>
            <person name="Dose S."/>
            <person name="de Haan M."/>
            <person name="Maarse A.C."/>
            <person name="Schaefer M."/>
            <person name="Mueller-Auer S."/>
            <person name="Gabel C."/>
            <person name="Fuchs M."/>
            <person name="Fartmann B."/>
            <person name="Granderath K."/>
            <person name="Dauner D."/>
            <person name="Herzl A."/>
            <person name="Neumann S."/>
            <person name="Argiriou A."/>
            <person name="Vitale D."/>
            <person name="Liguori R."/>
            <person name="Piravandi E."/>
            <person name="Massenet O."/>
            <person name="Quigley F."/>
            <person name="Clabauld G."/>
            <person name="Muendlein A."/>
            <person name="Felber R."/>
            <person name="Schnabl S."/>
            <person name="Hiller R."/>
            <person name="Schmidt W."/>
            <person name="Lecharny A."/>
            <person name="Aubourg S."/>
            <person name="Chefdor F."/>
            <person name="Cooke R."/>
            <person name="Berger C."/>
            <person name="Monfort A."/>
            <person name="Casacuberta E."/>
            <person name="Gibbons T."/>
            <person name="Weber N."/>
            <person name="Vandenbol M."/>
            <person name="Bargues M."/>
            <person name="Terol J."/>
            <person name="Torres A."/>
            <person name="Perez-Perez A."/>
            <person name="Purnelle B."/>
            <person name="Bent E."/>
            <person name="Johnson S."/>
            <person name="Tacon D."/>
            <person name="Jesse T."/>
            <person name="Heijnen L."/>
            <person name="Schwarz S."/>
            <person name="Scholler P."/>
            <person name="Heber S."/>
            <person name="Francs P."/>
            <person name="Bielke C."/>
            <person name="Frishman D."/>
            <person name="Haase D."/>
            <person name="Lemcke K."/>
            <person name="Mewes H.-W."/>
            <person name="Stocker S."/>
            <person name="Zaccaria P."/>
            <person name="Bevan M."/>
            <person name="Wilson R.K."/>
            <person name="de la Bastide M."/>
            <person name="Habermann K."/>
            <person name="Parnell L."/>
            <person name="Dedhia N."/>
            <person name="Gnoj L."/>
            <person name="Schutz K."/>
            <person name="Huang E."/>
            <person name="Spiegel L."/>
            <person name="Sekhon M."/>
            <person name="Murray J."/>
            <person name="Sheet P."/>
            <person name="Cordes M."/>
            <person name="Abu-Threideh J."/>
            <person name="Stoneking T."/>
            <person name="Kalicki J."/>
            <person name="Graves T."/>
            <person name="Harmon G."/>
            <person name="Edwards J."/>
            <person name="Latreille P."/>
            <person name="Courtney L."/>
            <person name="Cloud J."/>
            <person name="Abbott A."/>
            <person name="Scott K."/>
            <person name="Johnson D."/>
            <person name="Minx P."/>
            <person name="Bentley D."/>
            <person name="Fulton B."/>
            <person name="Miller N."/>
            <person name="Greco T."/>
            <person name="Kemp K."/>
            <person name="Kramer J."/>
            <person name="Fulton L."/>
            <person name="Mardis E."/>
            <person name="Dante M."/>
            <person name="Pepin K."/>
            <person name="Hillier L.W."/>
            <person name="Nelson J."/>
            <person name="Spieth J."/>
            <person name="Ryan E."/>
            <person name="Andrews S."/>
            <person name="Geisel C."/>
            <person name="Layman D."/>
            <person name="Du H."/>
            <person name="Ali J."/>
            <person name="Berghoff A."/>
            <person name="Jones K."/>
            <person name="Drone K."/>
            <person name="Cotton M."/>
            <person name="Joshu C."/>
            <person name="Antonoiu B."/>
            <person name="Zidanic M."/>
            <person name="Strong C."/>
            <person name="Sun H."/>
            <person name="Lamar B."/>
            <person name="Yordan C."/>
            <person name="Ma P."/>
            <person name="Zhong J."/>
            <person name="Preston R."/>
            <person name="Vil D."/>
            <person name="Shekher M."/>
            <person name="Matero A."/>
            <person name="Shah R."/>
            <person name="Swaby I.K."/>
            <person name="O'Shaughnessy A."/>
            <person name="Rodriguez M."/>
            <person name="Hoffman J."/>
            <person name="Till S."/>
            <person name="Granat S."/>
            <person name="Shohdy N."/>
            <person name="Hasegawa A."/>
            <person name="Hameed A."/>
            <person name="Lodhi M."/>
            <person name="Johnson A."/>
            <person name="Chen E."/>
            <person name="Marra M.A."/>
            <person name="Martienssen R."/>
            <person name="McCombie W.R."/>
        </authorList>
    </citation>
    <scope>NUCLEOTIDE SEQUENCE [LARGE SCALE GENOMIC DNA]</scope>
    <source>
        <strain>cv. Columbia</strain>
    </source>
</reference>
<reference key="2">
    <citation type="journal article" date="2017" name="Plant J.">
        <title>Araport11: a complete reannotation of the Arabidopsis thaliana reference genome.</title>
        <authorList>
            <person name="Cheng C.Y."/>
            <person name="Krishnakumar V."/>
            <person name="Chan A.P."/>
            <person name="Thibaud-Nissen F."/>
            <person name="Schobel S."/>
            <person name="Town C.D."/>
        </authorList>
    </citation>
    <scope>GENOME REANNOTATION</scope>
    <source>
        <strain>cv. Columbia</strain>
    </source>
</reference>
<reference key="3">
    <citation type="journal article" date="2009" name="Plant Mol. Biol.">
        <title>Stress induced and nuclear localized HIPP26 from Arabidopsis thaliana interacts via its heavy metal associated domain with the drought stress related zinc finger transcription factor ATHB29.</title>
        <authorList>
            <person name="Barth O."/>
            <person name="Vogt S."/>
            <person name="Uhlemann R."/>
            <person name="Zschiesche W."/>
            <person name="Humbeck K."/>
        </authorList>
    </citation>
    <scope>INTERACTION WITH ZHD11/HB29</scope>
    <source>
        <strain>cv. Columbia</strain>
    </source>
</reference>
<reference key="4">
    <citation type="journal article" date="2010" name="Metallomics">
        <title>Metallochaperone-like genes in Arabidopsis thaliana.</title>
        <authorList>
            <person name="Tehseen M."/>
            <person name="Cairns N."/>
            <person name="Sherson S."/>
            <person name="Cobbett C.S."/>
        </authorList>
    </citation>
    <scope>GENE FAMILY</scope>
    <scope>NOMENCLATURE</scope>
</reference>
<reference key="5">
    <citation type="journal article" date="2013" name="FEBS J.">
        <title>Heavy metal-associated isoprenylated plant protein (HIPP): characterization of a family of proteins exclusive to plants.</title>
        <authorList>
            <person name="de Abreu-Neto J.B."/>
            <person name="Turchetto-Zolet A.C."/>
            <person name="de Oliveira L.F."/>
            <person name="Zanettini M.H."/>
            <person name="Margis-Pinheiro M."/>
        </authorList>
    </citation>
    <scope>GENE FAMILY</scope>
    <scope>NOMENCLATURE</scope>
</reference>